<reference key="1">
    <citation type="journal article" date="2002" name="Proc. Natl. Acad. Sci. U.S.A.">
        <title>Extensive mosaic structure revealed by the complete genome sequence of uropathogenic Escherichia coli.</title>
        <authorList>
            <person name="Welch R.A."/>
            <person name="Burland V."/>
            <person name="Plunkett G. III"/>
            <person name="Redford P."/>
            <person name="Roesch P."/>
            <person name="Rasko D."/>
            <person name="Buckles E.L."/>
            <person name="Liou S.-R."/>
            <person name="Boutin A."/>
            <person name="Hackett J."/>
            <person name="Stroud D."/>
            <person name="Mayhew G.F."/>
            <person name="Rose D.J."/>
            <person name="Zhou S."/>
            <person name="Schwartz D.C."/>
            <person name="Perna N.T."/>
            <person name="Mobley H.L.T."/>
            <person name="Donnenberg M.S."/>
            <person name="Blattner F.R."/>
        </authorList>
    </citation>
    <scope>NUCLEOTIDE SEQUENCE [LARGE SCALE GENOMIC DNA]</scope>
    <source>
        <strain>CFT073 / ATCC 700928 / UPEC</strain>
    </source>
</reference>
<organism>
    <name type="scientific">Escherichia coli O6:H1 (strain CFT073 / ATCC 700928 / UPEC)</name>
    <dbReference type="NCBI Taxonomy" id="199310"/>
    <lineage>
        <taxon>Bacteria</taxon>
        <taxon>Pseudomonadati</taxon>
        <taxon>Pseudomonadota</taxon>
        <taxon>Gammaproteobacteria</taxon>
        <taxon>Enterobacterales</taxon>
        <taxon>Enterobacteriaceae</taxon>
        <taxon>Escherichia</taxon>
    </lineage>
</organism>
<proteinExistence type="inferred from homology"/>
<protein>
    <recommendedName>
        <fullName evidence="2">Single-stranded DNA-binding protein</fullName>
        <shortName evidence="2">SSB</shortName>
    </recommendedName>
</protein>
<gene>
    <name type="primary">ssb</name>
    <name type="ordered locus">c5049</name>
</gene>
<comment type="function">
    <text evidence="2">Plays an important role in DNA replication, recombination and repair. Binds to ssDNA and to an array of partner proteins to recruit them to their sites of action during DNA metabolism.</text>
</comment>
<comment type="subunit">
    <text evidence="2">Homotetramer.</text>
</comment>
<evidence type="ECO:0000250" key="1"/>
<evidence type="ECO:0000255" key="2">
    <source>
        <dbReference type="HAMAP-Rule" id="MF_00984"/>
    </source>
</evidence>
<evidence type="ECO:0000256" key="3">
    <source>
        <dbReference type="SAM" id="MobiDB-lite"/>
    </source>
</evidence>
<dbReference type="EMBL" id="AE014075">
    <property type="protein sequence ID" value="AAN83475.1"/>
    <property type="molecule type" value="Genomic_DNA"/>
</dbReference>
<dbReference type="BMRB" id="P0AGE1"/>
<dbReference type="SMR" id="P0AGE1"/>
<dbReference type="STRING" id="199310.c5049"/>
<dbReference type="KEGG" id="ecc:c5049"/>
<dbReference type="eggNOG" id="COG0629">
    <property type="taxonomic scope" value="Bacteria"/>
</dbReference>
<dbReference type="HOGENOM" id="CLU_078758_0_2_6"/>
<dbReference type="BioCyc" id="ECOL199310:C5049-MONOMER"/>
<dbReference type="Proteomes" id="UP000001410">
    <property type="component" value="Chromosome"/>
</dbReference>
<dbReference type="GO" id="GO:0009295">
    <property type="term" value="C:nucleoid"/>
    <property type="evidence" value="ECO:0007669"/>
    <property type="project" value="TreeGrafter"/>
</dbReference>
<dbReference type="GO" id="GO:0003697">
    <property type="term" value="F:single-stranded DNA binding"/>
    <property type="evidence" value="ECO:0007669"/>
    <property type="project" value="UniProtKB-UniRule"/>
</dbReference>
<dbReference type="GO" id="GO:0006310">
    <property type="term" value="P:DNA recombination"/>
    <property type="evidence" value="ECO:0007669"/>
    <property type="project" value="UniProtKB-UniRule"/>
</dbReference>
<dbReference type="GO" id="GO:0006281">
    <property type="term" value="P:DNA repair"/>
    <property type="evidence" value="ECO:0007669"/>
    <property type="project" value="UniProtKB-UniRule"/>
</dbReference>
<dbReference type="GO" id="GO:0006260">
    <property type="term" value="P:DNA replication"/>
    <property type="evidence" value="ECO:0007669"/>
    <property type="project" value="UniProtKB-UniRule"/>
</dbReference>
<dbReference type="CDD" id="cd04496">
    <property type="entry name" value="SSB_OBF"/>
    <property type="match status" value="1"/>
</dbReference>
<dbReference type="FunFam" id="2.40.50.140:FF:000065">
    <property type="entry name" value="Single-stranded DNA-binding protein"/>
    <property type="match status" value="1"/>
</dbReference>
<dbReference type="Gene3D" id="2.40.50.140">
    <property type="entry name" value="Nucleic acid-binding proteins"/>
    <property type="match status" value="1"/>
</dbReference>
<dbReference type="HAMAP" id="MF_00984">
    <property type="entry name" value="SSB"/>
    <property type="match status" value="1"/>
</dbReference>
<dbReference type="InterPro" id="IPR012340">
    <property type="entry name" value="NA-bd_OB-fold"/>
</dbReference>
<dbReference type="InterPro" id="IPR000424">
    <property type="entry name" value="Primosome_PriB/ssb"/>
</dbReference>
<dbReference type="InterPro" id="IPR011344">
    <property type="entry name" value="ssDNA-bd"/>
</dbReference>
<dbReference type="NCBIfam" id="NF006533">
    <property type="entry name" value="PRK09010.1"/>
    <property type="match status" value="1"/>
</dbReference>
<dbReference type="NCBIfam" id="TIGR00621">
    <property type="entry name" value="ssb"/>
    <property type="match status" value="1"/>
</dbReference>
<dbReference type="PANTHER" id="PTHR10302">
    <property type="entry name" value="SINGLE-STRANDED DNA-BINDING PROTEIN"/>
    <property type="match status" value="1"/>
</dbReference>
<dbReference type="PANTHER" id="PTHR10302:SF27">
    <property type="entry name" value="SINGLE-STRANDED DNA-BINDING PROTEIN"/>
    <property type="match status" value="1"/>
</dbReference>
<dbReference type="Pfam" id="PF00436">
    <property type="entry name" value="SSB"/>
    <property type="match status" value="1"/>
</dbReference>
<dbReference type="PIRSF" id="PIRSF002070">
    <property type="entry name" value="SSB"/>
    <property type="match status" value="1"/>
</dbReference>
<dbReference type="SUPFAM" id="SSF50249">
    <property type="entry name" value="Nucleic acid-binding proteins"/>
    <property type="match status" value="1"/>
</dbReference>
<dbReference type="PROSITE" id="PS50935">
    <property type="entry name" value="SSB"/>
    <property type="match status" value="1"/>
</dbReference>
<accession>P0AGE1</accession>
<accession>P02339</accession>
<keyword id="KW-0227">DNA damage</keyword>
<keyword id="KW-0233">DNA recombination</keyword>
<keyword id="KW-0234">DNA repair</keyword>
<keyword id="KW-0235">DNA replication</keyword>
<keyword id="KW-0238">DNA-binding</keyword>
<keyword id="KW-1185">Reference proteome</keyword>
<feature type="initiator methionine" description="Removed" evidence="1">
    <location>
        <position position="1"/>
    </location>
</feature>
<feature type="chain" id="PRO_0000096038" description="Single-stranded DNA-binding protein">
    <location>
        <begin position="2"/>
        <end position="178"/>
    </location>
</feature>
<feature type="domain" description="SSB" evidence="2">
    <location>
        <begin position="6"/>
        <end position="111"/>
    </location>
</feature>
<feature type="DNA-binding region" evidence="2">
    <location>
        <begin position="55"/>
        <end position="61"/>
    </location>
</feature>
<feature type="region of interest" description="Disordered" evidence="3">
    <location>
        <begin position="113"/>
        <end position="178"/>
    </location>
</feature>
<feature type="short sequence motif" description="Important for interaction with partner proteins" evidence="2">
    <location>
        <begin position="173"/>
        <end position="178"/>
    </location>
</feature>
<feature type="compositionally biased region" description="Gly residues" evidence="3">
    <location>
        <begin position="115"/>
        <end position="137"/>
    </location>
</feature>
<feature type="compositionally biased region" description="Low complexity" evidence="3">
    <location>
        <begin position="138"/>
        <end position="165"/>
    </location>
</feature>
<sequence length="178" mass="18975">MASRGVNKVILVGNLGQDPEVRYMPNGGAVANITLATSESWRDKATGEMKEQTEWHRVVLFGKLAEVASEYLRKGSQVYIEGQLRTRKWTDQSGQDRYTTEVVVNVGGTMQMLGGRQGGGAPAGGNIGGGQPQGGWGQPQQPQGGNQFSGGAQSRPQQSAPAAPSNEPPMDFDDDIPF</sequence>
<name>SSB_ECOL6</name>